<accession>F9XMW3</accession>
<proteinExistence type="inferred from homology"/>
<organism>
    <name type="scientific">Zymoseptoria tritici (strain CBS 115943 / IPO323)</name>
    <name type="common">Speckled leaf blotch fungus</name>
    <name type="synonym">Septoria tritici</name>
    <dbReference type="NCBI Taxonomy" id="336722"/>
    <lineage>
        <taxon>Eukaryota</taxon>
        <taxon>Fungi</taxon>
        <taxon>Dikarya</taxon>
        <taxon>Ascomycota</taxon>
        <taxon>Pezizomycotina</taxon>
        <taxon>Dothideomycetes</taxon>
        <taxon>Dothideomycetidae</taxon>
        <taxon>Mycosphaerellales</taxon>
        <taxon>Mycosphaerellaceae</taxon>
        <taxon>Zymoseptoria</taxon>
    </lineage>
</organism>
<protein>
    <recommendedName>
        <fullName evidence="13">Non-reducing polyketide synthase PKS1</fullName>
        <ecNumber evidence="15">2.3.1.-</ecNumber>
    </recommendedName>
    <alternativeName>
        <fullName evidence="14">Conidial pigment biosynthesis cluster 29 protein PKS1</fullName>
    </alternativeName>
</protein>
<gene>
    <name evidence="13" type="primary">PKS1</name>
    <name type="ORF">MYCGRDRAFT_96592</name>
</gene>
<keyword id="KW-0470">Melanin biosynthesis</keyword>
<keyword id="KW-0511">Multifunctional enzyme</keyword>
<keyword id="KW-0596">Phosphopantetheine</keyword>
<keyword id="KW-0597">Phosphoprotein</keyword>
<keyword id="KW-1185">Reference proteome</keyword>
<keyword id="KW-0677">Repeat</keyword>
<keyword id="KW-0808">Transferase</keyword>
<evidence type="ECO:0000250" key="1">
    <source>
        <dbReference type="UniProtKB" id="Q03149"/>
    </source>
</evidence>
<evidence type="ECO:0000250" key="2">
    <source>
        <dbReference type="UniProtKB" id="Q5B0D0"/>
    </source>
</evidence>
<evidence type="ECO:0000250" key="3">
    <source>
        <dbReference type="UniProtKB" id="Q9Y8A5"/>
    </source>
</evidence>
<evidence type="ECO:0000250" key="4">
    <source>
        <dbReference type="UniProtKB" id="W3X7U2"/>
    </source>
</evidence>
<evidence type="ECO:0000255" key="5"/>
<evidence type="ECO:0000255" key="6">
    <source>
        <dbReference type="PROSITE-ProRule" id="PRU00258"/>
    </source>
</evidence>
<evidence type="ECO:0000255" key="7">
    <source>
        <dbReference type="PROSITE-ProRule" id="PRU01348"/>
    </source>
</evidence>
<evidence type="ECO:0000255" key="8">
    <source>
        <dbReference type="PROSITE-ProRule" id="PRU01363"/>
    </source>
</evidence>
<evidence type="ECO:0000255" key="9">
    <source>
        <dbReference type="PROSITE-ProRule" id="PRU10022"/>
    </source>
</evidence>
<evidence type="ECO:0000256" key="10">
    <source>
        <dbReference type="SAM" id="MobiDB-lite"/>
    </source>
</evidence>
<evidence type="ECO:0000269" key="11">
    <source>
    </source>
</evidence>
<evidence type="ECO:0000269" key="12">
    <source>
    </source>
</evidence>
<evidence type="ECO:0000303" key="13">
    <source>
    </source>
</evidence>
<evidence type="ECO:0000303" key="14">
    <source>
    </source>
</evidence>
<evidence type="ECO:0000305" key="15">
    <source>
    </source>
</evidence>
<evidence type="ECO:0000305" key="16">
    <source>
    </source>
</evidence>
<name>PKS1_ZYMTI</name>
<reference key="1">
    <citation type="journal article" date="2011" name="PLoS Genet.">
        <title>Finished genome of the fungal wheat pathogen Mycosphaerella graminicola reveals dispensome structure, chromosome plasticity, and stealth pathogenesis.</title>
        <authorList>
            <person name="Goodwin S.B."/>
            <person name="Ben M'barek S."/>
            <person name="Dhillon B."/>
            <person name="Wittenberg A.H.J."/>
            <person name="Crane C.F."/>
            <person name="Hane J.K."/>
            <person name="Foster A.J."/>
            <person name="Van der Lee T.A.J."/>
            <person name="Grimwood J."/>
            <person name="Aerts A."/>
            <person name="Antoniw J."/>
            <person name="Bailey A."/>
            <person name="Bluhm B."/>
            <person name="Bowler J."/>
            <person name="Bristow J."/>
            <person name="van der Burgt A."/>
            <person name="Canto-Canche B."/>
            <person name="Churchill A.C.L."/>
            <person name="Conde-Ferraez L."/>
            <person name="Cools H.J."/>
            <person name="Coutinho P.M."/>
            <person name="Csukai M."/>
            <person name="Dehal P."/>
            <person name="De Wit P."/>
            <person name="Donzelli B."/>
            <person name="van de Geest H.C."/>
            <person name="van Ham R.C.H.J."/>
            <person name="Hammond-Kosack K.E."/>
            <person name="Henrissat B."/>
            <person name="Kilian A."/>
            <person name="Kobayashi A.K."/>
            <person name="Koopmann E."/>
            <person name="Kourmpetis Y."/>
            <person name="Kuzniar A."/>
            <person name="Lindquist E."/>
            <person name="Lombard V."/>
            <person name="Maliepaard C."/>
            <person name="Martins N."/>
            <person name="Mehrabi R."/>
            <person name="Nap J.P.H."/>
            <person name="Ponomarenko A."/>
            <person name="Rudd J.J."/>
            <person name="Salamov A."/>
            <person name="Schmutz J."/>
            <person name="Schouten H.J."/>
            <person name="Shapiro H."/>
            <person name="Stergiopoulos I."/>
            <person name="Torriani S.F.F."/>
            <person name="Tu H."/>
            <person name="de Vries R.P."/>
            <person name="Waalwijk C."/>
            <person name="Ware S.B."/>
            <person name="Wiebenga A."/>
            <person name="Zwiers L.-H."/>
            <person name="Oliver R.P."/>
            <person name="Grigoriev I.V."/>
            <person name="Kema G.H.J."/>
        </authorList>
    </citation>
    <scope>NUCLEOTIDE SEQUENCE [LARGE SCALE GENOMIC DNA]</scope>
    <source>
        <strain>CBS 115943 / IPO323</strain>
    </source>
</reference>
<reference key="2">
    <citation type="journal article" date="2014" name="G3 (Bethesda)">
        <title>Quantitative trait locus mapping of melanization in the plant pathogenic fungus Zymoseptoria tritici.</title>
        <authorList>
            <person name="Lendenmann M.H."/>
            <person name="Croll D."/>
            <person name="Stewart E.L."/>
            <person name="McDonald B.A."/>
        </authorList>
    </citation>
    <scope>IDENTIFICATION</scope>
    <scope>FUNCTION</scope>
</reference>
<reference key="3">
    <citation type="journal article" date="2017" name="BMC Genomics">
        <title>In silico prediction and characterization of secondary metabolite biosynthetic gene clusters in the wheat pathogen Zymoseptoria tritici.</title>
        <authorList>
            <person name="Cairns T."/>
            <person name="Meyer V."/>
        </authorList>
    </citation>
    <scope>FUNCTION</scope>
    <scope>PATHWAY</scope>
</reference>
<feature type="chain" id="PRO_0000451090" description="Non-reducing polyketide synthase PKS1">
    <location>
        <begin position="1"/>
        <end position="2175"/>
    </location>
</feature>
<feature type="domain" description="Ketosynthase family 3 (KS3)" evidence="7">
    <location>
        <begin position="369"/>
        <end position="801"/>
    </location>
</feature>
<feature type="domain" description="PKS/mFAS DH" evidence="8">
    <location>
        <begin position="1289"/>
        <end position="1599"/>
    </location>
</feature>
<feature type="domain" description="Carrier 1" evidence="6">
    <location>
        <begin position="1666"/>
        <end position="1743"/>
    </location>
</feature>
<feature type="domain" description="Carrier 2" evidence="6">
    <location>
        <begin position="1801"/>
        <end position="1878"/>
    </location>
</feature>
<feature type="region of interest" description="N-terminal acylcarrier protein transacylase domain (SAT)," evidence="5">
    <location>
        <begin position="5"/>
        <end position="242"/>
    </location>
</feature>
<feature type="region of interest" description="Malonyl-CoA:ACP transacylase (MAT) domain" evidence="5">
    <location>
        <begin position="900"/>
        <end position="1212"/>
    </location>
</feature>
<feature type="region of interest" description="Product template (PT) domain" evidence="5">
    <location>
        <begin position="1285"/>
        <end position="1604"/>
    </location>
</feature>
<feature type="region of interest" description="N-terminal hotdog fold" evidence="8">
    <location>
        <begin position="1289"/>
        <end position="1424"/>
    </location>
</feature>
<feature type="region of interest" description="C-terminal hotdog fold" evidence="8">
    <location>
        <begin position="1452"/>
        <end position="1599"/>
    </location>
</feature>
<feature type="region of interest" description="Disordered" evidence="10">
    <location>
        <begin position="1640"/>
        <end position="1664"/>
    </location>
</feature>
<feature type="region of interest" description="Disordered" evidence="10">
    <location>
        <begin position="1766"/>
        <end position="1804"/>
    </location>
</feature>
<feature type="region of interest" description="Disordered" evidence="10">
    <location>
        <begin position="1879"/>
        <end position="1899"/>
    </location>
</feature>
<feature type="region of interest" description="Claisen cyclase domain" evidence="1">
    <location>
        <begin position="1932"/>
        <end position="2158"/>
    </location>
</feature>
<feature type="compositionally biased region" description="Low complexity" evidence="10">
    <location>
        <begin position="1643"/>
        <end position="1664"/>
    </location>
</feature>
<feature type="compositionally biased region" description="Polar residues" evidence="10">
    <location>
        <begin position="1774"/>
        <end position="1784"/>
    </location>
</feature>
<feature type="compositionally biased region" description="Polar residues" evidence="10">
    <location>
        <begin position="1889"/>
        <end position="1899"/>
    </location>
</feature>
<feature type="active site" description="For beta-ketoacyl synthase activity" evidence="7">
    <location>
        <position position="541"/>
    </location>
</feature>
<feature type="active site" description="For beta-ketoacyl synthase activity" evidence="7">
    <location>
        <position position="676"/>
    </location>
</feature>
<feature type="active site" description="For beta-ketoacyl synthase activity" evidence="7">
    <location>
        <position position="719"/>
    </location>
</feature>
<feature type="active site" description="For acyl/malonyl transferase activity" evidence="9">
    <location>
        <position position="988"/>
    </location>
</feature>
<feature type="active site" description="Proton acceptor; for dehydratase activity" evidence="8">
    <location>
        <position position="1321"/>
    </location>
</feature>
<feature type="active site" description="Proton donor; for dehydratase activity" evidence="8">
    <location>
        <position position="1512"/>
    </location>
</feature>
<feature type="active site" description="For Claisen cyclase activity" evidence="1">
    <location>
        <position position="2002"/>
    </location>
</feature>
<feature type="modified residue" description="O-(pantetheine 4'-phosphoryl)serine" evidence="6">
    <location>
        <position position="1703"/>
    </location>
</feature>
<feature type="modified residue" description="O-(pantetheine 4'-phosphoryl)serine" evidence="6">
    <location>
        <position position="1838"/>
    </location>
</feature>
<sequence length="2175" mass="235713">MSNILLFGDQTAEQYPLLHRIVLRKDNVLLLSFVERCALALREETRTLSRSQREVMPDFLTLSNLIEAYYQKGEKVLMLESAFLTIAQLGHYIGYFSENPSELPAVSDTRVLGLCTGLLAASAVVSAKTVEELAIVGVDFVRIAFRSGAVVDNVRSMLGQSSQDKSTWSTIISGPSEVDVKDALTSFHEASGIPRSNQAYVSAVSTMALTVSGPPITVERFFQESSLIINHRVSIPIYGPYHAGHLFGEAECERILSGEVGQELRKHMPASLVHSAATGKPIVSENAYELAKLALGEIHQYPVRWDYLLEETVAQIGHYPCGAKIFALGASNIATSLSSALKAGGQADVMIVDEASFVETKKYTGRTQTDKIAIVGMAGRFPNSANHEALWDLLMKGLDVHRKVPADRFDADAHCDPSGKGKNKSHTPFGCFIDEPGLFDPRFFNMSPREAAQTDPMGRLALVTAYEALEMSGYVPNRSTSTKLNRIGTFYGQTSDDWREINAAENVDTYYITGGVRAFAPGRINYYFKFSGPSYSIDTACSSSLAAIQLACTSLWAGDCDTACAGGLNVLTNPDIFSGLSKGQFLSKTGGCKTYDNDADGYCRGDACGTVILKRYQDAVADKDNILGCILGAATNHSAEAVSITHPHAGAQEFLYKQVLANAGIDAHEISYVEMHGTGTQAGDGIEMTSVTNVFAPRRRQRKPEQTVHLGAIKANVGHAEAASGINSLVKVLMMMKNNKIPANVGVKGELNKTFPADLKDRNVHISLKQVDWPRKTEAPRKVFLNNFSAAGGNTALLIEDGPVHKMPNGVDPRSTLPITVTARSIGSLKRNLMNLQKYVAENGSTTLPSFSYTLTARRIQHNYRVAFPLADISKVADALEAQAKDSYSPVPMVTTKTAFCFTGQGSQYTGLGQKLYQDLKSFRDDIDQLDQMARIQGLPSFLELLDGTDVQTLSPVKVQLGMACIQVALSRMWASWGVTPTAVIGHSLGEYAALHVAGVISASDMVLLVGRRAELLVRECTPHTHGMLAVKGGVEAIRNALGINMTEIACINGPEETVLCGSSDVVAAANDTLGKNGFKATKLNVPFAFHSAQVDPILDEFRKVASSVTFNKPSVPILSPLVGIVIRDGGIITADYLARHARETVNFSSALLSGQKEAVFDEKTAWLEVGAHPVCSGMVKASIGTTITAPSLRRGEDAWKTISTSICHLFTAGVNFNFDEFHREFNDAQELLTLPTYSFDNKKYWLDYHNNWTLTKGEVQKTKEVIVEKEIVAPVIEVPAKRLSTSCQNVISEEFDGNRATVVIRSNLADSKLYPVVCGHMVNNAALCPSSLYADMALTVGDYIYKELQPGVETPGMNVCNMEVPKPFIANIPQPAEGQHLEMEATADLDLGTVSLKFRSVHPDGKKIQDHAFCTIRYEDKAVWASEWTRYNYMVKAQIDMLTARTMTGGAHKVQRGMAYKLFKALVNYDDKYRAMAEVVLDGANTEASAAIDFPTKPDDGDFYCPPYHIDGACHISGFIVNASDLLDSEQNVYVSHGWGAMKFSRPLVAGMKLRNYVRMVPQPNNISKGDVYIMEGDEIVAVCEGIKFQQIPRKVLNVFLPPNKGSAVQAKPSPIAQRPAPVRASVAAPVKRMLAPAPVRKSAGPAKAAAAPSMPKPSKVAAKKPAGSMVDKVLTILSKETEVDVAELVDDAHFENLGVDSLLSLTISAIFREDLSMEISPSLFTDYPTVGEMKKYFSQFNNVESTTESEDDSDTDSLATTDVATPFDEMSTPASSAPSVPQSDAGKPSPDSPTGDSLSDDVGDVSIARHIIAQEMGVDISEVTDDAELAEMGMDSLMSLTILGELREKTGIDLPGTFLMTNPTLVDIENALGMRPKPKAVGPKLSKPSTKTDMNEVSSRLTAINKTDISQYPSATSVLLQGNPKTATKKVFFLPDGSGSATSYVSIPNIGPHVAAFGLNCPFMKDPEQWQCGIEVSSLIYLAEIRRRQPKGPYIIGGWSAGGVIAYAVAQALLAAGEKVEKLLLLDSPCPVNLAPLPTRLHVFFNEIGLLGTGDPAKTPKWLLPHFSAAIRSLSAYDPKPTIAELPTYAVWCKDGVAGNPGDPRPPPAEEEDPAPMKWLLNHRTDFSDNGWAQLCGQNMKFGVMGGHHFSMMKDPHASELGQLIKEGIEWKA</sequence>
<comment type="function">
    <text evidence="4 11 12">Non-reducing polyketide synthase; part of the gene cluster 29 that mediates the biosynthesis of mediates the biosynthesis of dihydroxynaphthalene (DHN)-melanin, a bluish-green pigment and a structural component of the conidial wall (PubMed:25360032, PubMed:28818040). The first step of the pathway is the production of the heptaketide naphtopyrone YWA1 by the polyketide synthase PKS1 though condensation of acetyl-CoA with malonyl-CoA (By similarity).</text>
</comment>
<comment type="catalytic activity">
    <reaction evidence="4">
        <text>6 malonyl-CoA + acetyl-CoA + 6 H(+) = naphtopyrone YWA1 + 6 CO2 + 7 CoA + H2O</text>
        <dbReference type="Rhea" id="RHEA:62652"/>
        <dbReference type="ChEBI" id="CHEBI:15377"/>
        <dbReference type="ChEBI" id="CHEBI:15378"/>
        <dbReference type="ChEBI" id="CHEBI:16526"/>
        <dbReference type="ChEBI" id="CHEBI:57287"/>
        <dbReference type="ChEBI" id="CHEBI:57288"/>
        <dbReference type="ChEBI" id="CHEBI:57384"/>
        <dbReference type="ChEBI" id="CHEBI:133763"/>
    </reaction>
    <physiologicalReaction direction="left-to-right" evidence="4">
        <dbReference type="Rhea" id="RHEA:62653"/>
    </physiologicalReaction>
</comment>
<comment type="cofactor">
    <cofactor evidence="3">
        <name>pantetheine 4'-phosphate</name>
        <dbReference type="ChEBI" id="CHEBI:47942"/>
    </cofactor>
    <text evidence="3">Binds 1 phosphopantetheine covalently.</text>
</comment>
<comment type="pathway">
    <text evidence="16">Pigment biosynthesis; melanin biosynthesis.</text>
</comment>
<comment type="domain">
    <text evidence="2">Multidomain protein; including a starter unit:ACP transacylase (SAT) that selects the starter unit; a ketosynthase (KS) that catalyzes repeated decarboxylative condensation to elongate the polyketide backbone; a malonyl-CoA:ACP transacylase (MAT) that selects and transfers the extender unit malonyl-CoA; a product template (PT) domain that controls the immediate cyclization regioselectivity of the reactive polyketide backbone; and an acyl-carrier protein (ACP) that serves as the tether of the growing and completed polyketide via its phosphopantetheinyl arm.</text>
</comment>
<comment type="domain">
    <text evidence="1">The C-terminal region is involved in Claisen-type cyclization of the second ring of naphthopyrone.</text>
</comment>
<dbReference type="EC" id="2.3.1.-" evidence="15"/>
<dbReference type="EMBL" id="CM001206">
    <property type="protein sequence ID" value="EGP83620.1"/>
    <property type="molecule type" value="Genomic_DNA"/>
</dbReference>
<dbReference type="RefSeq" id="XP_003848644.1">
    <property type="nucleotide sequence ID" value="XM_003848596.1"/>
</dbReference>
<dbReference type="SMR" id="F9XMW3"/>
<dbReference type="STRING" id="336722.F9XMW3"/>
<dbReference type="ESTHER" id="zymti-pks1">
    <property type="family name" value="Thioesterase"/>
</dbReference>
<dbReference type="EnsemblFungi" id="Mycgr3T96592">
    <property type="protein sequence ID" value="Mycgr3P96592"/>
    <property type="gene ID" value="Mycgr3G96592"/>
</dbReference>
<dbReference type="GeneID" id="13396530"/>
<dbReference type="KEGG" id="ztr:MYCGRDRAFT_96592"/>
<dbReference type="VEuPathDB" id="FungiDB:ZTRI_11.184"/>
<dbReference type="eggNOG" id="KOG1202">
    <property type="taxonomic scope" value="Eukaryota"/>
</dbReference>
<dbReference type="HOGENOM" id="CLU_000022_6_0_1"/>
<dbReference type="InParanoid" id="F9XMW3"/>
<dbReference type="OMA" id="YCRGDGC"/>
<dbReference type="OrthoDB" id="329835at2759"/>
<dbReference type="UniPathway" id="UPA00785"/>
<dbReference type="PHI-base" id="PHI:8593"/>
<dbReference type="Proteomes" id="UP000008062">
    <property type="component" value="Chromosome 11"/>
</dbReference>
<dbReference type="GO" id="GO:0004315">
    <property type="term" value="F:3-oxoacyl-[acyl-carrier-protein] synthase activity"/>
    <property type="evidence" value="ECO:0007669"/>
    <property type="project" value="InterPro"/>
</dbReference>
<dbReference type="GO" id="GO:0004312">
    <property type="term" value="F:fatty acid synthase activity"/>
    <property type="evidence" value="ECO:0007669"/>
    <property type="project" value="TreeGrafter"/>
</dbReference>
<dbReference type="GO" id="GO:0031177">
    <property type="term" value="F:phosphopantetheine binding"/>
    <property type="evidence" value="ECO:0007669"/>
    <property type="project" value="InterPro"/>
</dbReference>
<dbReference type="GO" id="GO:0006633">
    <property type="term" value="P:fatty acid biosynthetic process"/>
    <property type="evidence" value="ECO:0007669"/>
    <property type="project" value="InterPro"/>
</dbReference>
<dbReference type="GO" id="GO:0042438">
    <property type="term" value="P:melanin biosynthetic process"/>
    <property type="evidence" value="ECO:0000315"/>
    <property type="project" value="PHI-base"/>
</dbReference>
<dbReference type="CDD" id="cd00833">
    <property type="entry name" value="PKS"/>
    <property type="match status" value="1"/>
</dbReference>
<dbReference type="FunFam" id="3.40.366.10:FF:000002">
    <property type="entry name" value="Probable polyketide synthase 2"/>
    <property type="match status" value="1"/>
</dbReference>
<dbReference type="FunFam" id="1.10.1200.10:FF:000011">
    <property type="entry name" value="Sterigmatocystin biosynthesis polyketide synthase"/>
    <property type="match status" value="1"/>
</dbReference>
<dbReference type="FunFam" id="3.10.129.110:FF:000001">
    <property type="entry name" value="Sterigmatocystin biosynthesis polyketide synthase"/>
    <property type="match status" value="1"/>
</dbReference>
<dbReference type="FunFam" id="3.40.50.1820:FF:000116">
    <property type="entry name" value="Sterigmatocystin biosynthesis polyketide synthase"/>
    <property type="match status" value="1"/>
</dbReference>
<dbReference type="Gene3D" id="3.30.70.3290">
    <property type="match status" value="1"/>
</dbReference>
<dbReference type="Gene3D" id="3.40.47.10">
    <property type="match status" value="1"/>
</dbReference>
<dbReference type="Gene3D" id="1.10.1200.10">
    <property type="entry name" value="ACP-like"/>
    <property type="match status" value="2"/>
</dbReference>
<dbReference type="Gene3D" id="3.40.50.1820">
    <property type="entry name" value="alpha/beta hydrolase"/>
    <property type="match status" value="1"/>
</dbReference>
<dbReference type="Gene3D" id="3.40.366.10">
    <property type="entry name" value="Malonyl-Coenzyme A Acyl Carrier Protein, domain 2"/>
    <property type="match status" value="2"/>
</dbReference>
<dbReference type="Gene3D" id="3.10.129.110">
    <property type="entry name" value="Polyketide synthase dehydratase"/>
    <property type="match status" value="1"/>
</dbReference>
<dbReference type="InterPro" id="IPR029058">
    <property type="entry name" value="AB_hydrolase_fold"/>
</dbReference>
<dbReference type="InterPro" id="IPR001227">
    <property type="entry name" value="Ac_transferase_dom_sf"/>
</dbReference>
<dbReference type="InterPro" id="IPR036736">
    <property type="entry name" value="ACP-like_sf"/>
</dbReference>
<dbReference type="InterPro" id="IPR014043">
    <property type="entry name" value="Acyl_transferase_dom"/>
</dbReference>
<dbReference type="InterPro" id="IPR016035">
    <property type="entry name" value="Acyl_Trfase/lysoPLipase"/>
</dbReference>
<dbReference type="InterPro" id="IPR018201">
    <property type="entry name" value="Ketoacyl_synth_AS"/>
</dbReference>
<dbReference type="InterPro" id="IPR014031">
    <property type="entry name" value="Ketoacyl_synth_C"/>
</dbReference>
<dbReference type="InterPro" id="IPR014030">
    <property type="entry name" value="Ketoacyl_synth_N"/>
</dbReference>
<dbReference type="InterPro" id="IPR016036">
    <property type="entry name" value="Malonyl_transacylase_ACP-bd"/>
</dbReference>
<dbReference type="InterPro" id="IPR020841">
    <property type="entry name" value="PKS_Beta-ketoAc_synthase_dom"/>
</dbReference>
<dbReference type="InterPro" id="IPR042104">
    <property type="entry name" value="PKS_dehydratase_sf"/>
</dbReference>
<dbReference type="InterPro" id="IPR049900">
    <property type="entry name" value="PKS_mFAS_DH"/>
</dbReference>
<dbReference type="InterPro" id="IPR050091">
    <property type="entry name" value="PKS_NRPS_Biosynth_Enz"/>
</dbReference>
<dbReference type="InterPro" id="IPR020806">
    <property type="entry name" value="PKS_PP-bd"/>
</dbReference>
<dbReference type="InterPro" id="IPR009081">
    <property type="entry name" value="PP-bd_ACP"/>
</dbReference>
<dbReference type="InterPro" id="IPR006162">
    <property type="entry name" value="Ppantetheine_attach_site"/>
</dbReference>
<dbReference type="InterPro" id="IPR030918">
    <property type="entry name" value="PT_fungal_PKS"/>
</dbReference>
<dbReference type="InterPro" id="IPR032088">
    <property type="entry name" value="SAT"/>
</dbReference>
<dbReference type="InterPro" id="IPR001031">
    <property type="entry name" value="Thioesterase"/>
</dbReference>
<dbReference type="InterPro" id="IPR016039">
    <property type="entry name" value="Thiolase-like"/>
</dbReference>
<dbReference type="NCBIfam" id="TIGR04532">
    <property type="entry name" value="PT_fungal_PKS"/>
    <property type="match status" value="1"/>
</dbReference>
<dbReference type="PANTHER" id="PTHR43775">
    <property type="entry name" value="FATTY ACID SYNTHASE"/>
    <property type="match status" value="1"/>
</dbReference>
<dbReference type="PANTHER" id="PTHR43775:SF37">
    <property type="entry name" value="SI:DKEY-61P9.11"/>
    <property type="match status" value="1"/>
</dbReference>
<dbReference type="Pfam" id="PF00698">
    <property type="entry name" value="Acyl_transf_1"/>
    <property type="match status" value="1"/>
</dbReference>
<dbReference type="Pfam" id="PF00109">
    <property type="entry name" value="ketoacyl-synt"/>
    <property type="match status" value="1"/>
</dbReference>
<dbReference type="Pfam" id="PF02801">
    <property type="entry name" value="Ketoacyl-synt_C"/>
    <property type="match status" value="1"/>
</dbReference>
<dbReference type="Pfam" id="PF00550">
    <property type="entry name" value="PP-binding"/>
    <property type="match status" value="2"/>
</dbReference>
<dbReference type="Pfam" id="PF16073">
    <property type="entry name" value="SAT"/>
    <property type="match status" value="1"/>
</dbReference>
<dbReference type="Pfam" id="PF00975">
    <property type="entry name" value="Thioesterase"/>
    <property type="match status" value="1"/>
</dbReference>
<dbReference type="SMART" id="SM00827">
    <property type="entry name" value="PKS_AT"/>
    <property type="match status" value="1"/>
</dbReference>
<dbReference type="SMART" id="SM00825">
    <property type="entry name" value="PKS_KS"/>
    <property type="match status" value="1"/>
</dbReference>
<dbReference type="SMART" id="SM00823">
    <property type="entry name" value="PKS_PP"/>
    <property type="match status" value="2"/>
</dbReference>
<dbReference type="SUPFAM" id="SSF47336">
    <property type="entry name" value="ACP-like"/>
    <property type="match status" value="2"/>
</dbReference>
<dbReference type="SUPFAM" id="SSF53474">
    <property type="entry name" value="alpha/beta-Hydrolases"/>
    <property type="match status" value="1"/>
</dbReference>
<dbReference type="SUPFAM" id="SSF52151">
    <property type="entry name" value="FabD/lysophospholipase-like"/>
    <property type="match status" value="1"/>
</dbReference>
<dbReference type="SUPFAM" id="SSF55048">
    <property type="entry name" value="Probable ACP-binding domain of malonyl-CoA ACP transacylase"/>
    <property type="match status" value="1"/>
</dbReference>
<dbReference type="SUPFAM" id="SSF53901">
    <property type="entry name" value="Thiolase-like"/>
    <property type="match status" value="1"/>
</dbReference>
<dbReference type="PROSITE" id="PS50075">
    <property type="entry name" value="CARRIER"/>
    <property type="match status" value="2"/>
</dbReference>
<dbReference type="PROSITE" id="PS00606">
    <property type="entry name" value="KS3_1"/>
    <property type="match status" value="1"/>
</dbReference>
<dbReference type="PROSITE" id="PS52004">
    <property type="entry name" value="KS3_2"/>
    <property type="match status" value="1"/>
</dbReference>
<dbReference type="PROSITE" id="PS00012">
    <property type="entry name" value="PHOSPHOPANTETHEINE"/>
    <property type="match status" value="1"/>
</dbReference>
<dbReference type="PROSITE" id="PS52019">
    <property type="entry name" value="PKS_MFAS_DH"/>
    <property type="match status" value="1"/>
</dbReference>